<evidence type="ECO:0000255" key="1">
    <source>
        <dbReference type="HAMAP-Rule" id="MF_00104"/>
    </source>
</evidence>
<evidence type="ECO:0000305" key="2"/>
<proteinExistence type="inferred from homology"/>
<reference key="1">
    <citation type="journal article" date="2002" name="Proc. Natl. Acad. Sci. U.S.A.">
        <title>The genome sequence of Bifidobacterium longum reflects its adaptation to the human gastrointestinal tract.</title>
        <authorList>
            <person name="Schell M.A."/>
            <person name="Karmirantzou M."/>
            <person name="Snel B."/>
            <person name="Vilanova D."/>
            <person name="Berger B."/>
            <person name="Pessi G."/>
            <person name="Zwahlen M.-C."/>
            <person name="Desiere F."/>
            <person name="Bork P."/>
            <person name="Delley M."/>
            <person name="Pridmore R.D."/>
            <person name="Arigoni F."/>
        </authorList>
    </citation>
    <scope>NUCLEOTIDE SEQUENCE [LARGE SCALE GENOMIC DNA]</scope>
    <source>
        <strain>NCC 2705</strain>
    </source>
</reference>
<keyword id="KW-0963">Cytoplasm</keyword>
<keyword id="KW-0255">Endonuclease</keyword>
<keyword id="KW-0378">Hydrolase</keyword>
<keyword id="KW-0460">Magnesium</keyword>
<keyword id="KW-0479">Metal-binding</keyword>
<keyword id="KW-0507">mRNA processing</keyword>
<keyword id="KW-0540">Nuclease</keyword>
<keyword id="KW-1185">Reference proteome</keyword>
<keyword id="KW-0694">RNA-binding</keyword>
<keyword id="KW-0698">rRNA processing</keyword>
<keyword id="KW-0699">rRNA-binding</keyword>
<keyword id="KW-0819">tRNA processing</keyword>
<dbReference type="EC" id="3.1.26.3" evidence="1"/>
<dbReference type="EMBL" id="AE014295">
    <property type="protein sequence ID" value="AAN24135.1"/>
    <property type="status" value="ALT_INIT"/>
    <property type="molecule type" value="Genomic_DNA"/>
</dbReference>
<dbReference type="RefSeq" id="NP_695499.1">
    <property type="nucleotide sequence ID" value="NC_004307.2"/>
</dbReference>
<dbReference type="RefSeq" id="WP_007055729.1">
    <property type="nucleotide sequence ID" value="NC_004307.2"/>
</dbReference>
<dbReference type="SMR" id="Q8G7H1"/>
<dbReference type="STRING" id="206672.BL0295"/>
<dbReference type="EnsemblBacteria" id="AAN24135">
    <property type="protein sequence ID" value="AAN24135"/>
    <property type="gene ID" value="BL0295"/>
</dbReference>
<dbReference type="GeneID" id="69577562"/>
<dbReference type="KEGG" id="blo:BL0295"/>
<dbReference type="PATRIC" id="fig|206672.9.peg.1032"/>
<dbReference type="HOGENOM" id="CLU_000907_1_2_11"/>
<dbReference type="OrthoDB" id="9805026at2"/>
<dbReference type="Proteomes" id="UP000000439">
    <property type="component" value="Chromosome"/>
</dbReference>
<dbReference type="GO" id="GO:0005737">
    <property type="term" value="C:cytoplasm"/>
    <property type="evidence" value="ECO:0007669"/>
    <property type="project" value="UniProtKB-SubCell"/>
</dbReference>
<dbReference type="GO" id="GO:0003725">
    <property type="term" value="F:double-stranded RNA binding"/>
    <property type="evidence" value="ECO:0007669"/>
    <property type="project" value="TreeGrafter"/>
</dbReference>
<dbReference type="GO" id="GO:0046872">
    <property type="term" value="F:metal ion binding"/>
    <property type="evidence" value="ECO:0007669"/>
    <property type="project" value="UniProtKB-KW"/>
</dbReference>
<dbReference type="GO" id="GO:0004525">
    <property type="term" value="F:ribonuclease III activity"/>
    <property type="evidence" value="ECO:0007669"/>
    <property type="project" value="UniProtKB-UniRule"/>
</dbReference>
<dbReference type="GO" id="GO:0019843">
    <property type="term" value="F:rRNA binding"/>
    <property type="evidence" value="ECO:0007669"/>
    <property type="project" value="UniProtKB-KW"/>
</dbReference>
<dbReference type="GO" id="GO:0006397">
    <property type="term" value="P:mRNA processing"/>
    <property type="evidence" value="ECO:0007669"/>
    <property type="project" value="UniProtKB-UniRule"/>
</dbReference>
<dbReference type="GO" id="GO:0010468">
    <property type="term" value="P:regulation of gene expression"/>
    <property type="evidence" value="ECO:0007669"/>
    <property type="project" value="TreeGrafter"/>
</dbReference>
<dbReference type="GO" id="GO:0006364">
    <property type="term" value="P:rRNA processing"/>
    <property type="evidence" value="ECO:0007669"/>
    <property type="project" value="UniProtKB-UniRule"/>
</dbReference>
<dbReference type="GO" id="GO:0008033">
    <property type="term" value="P:tRNA processing"/>
    <property type="evidence" value="ECO:0007669"/>
    <property type="project" value="UniProtKB-KW"/>
</dbReference>
<dbReference type="CDD" id="cd10845">
    <property type="entry name" value="DSRM_RNAse_III_family"/>
    <property type="match status" value="1"/>
</dbReference>
<dbReference type="CDD" id="cd00593">
    <property type="entry name" value="RIBOc"/>
    <property type="match status" value="1"/>
</dbReference>
<dbReference type="FunFam" id="1.10.1520.10:FF:000001">
    <property type="entry name" value="Ribonuclease 3"/>
    <property type="match status" value="1"/>
</dbReference>
<dbReference type="Gene3D" id="3.30.160.20">
    <property type="match status" value="1"/>
</dbReference>
<dbReference type="Gene3D" id="1.10.1520.10">
    <property type="entry name" value="Ribonuclease III domain"/>
    <property type="match status" value="1"/>
</dbReference>
<dbReference type="HAMAP" id="MF_00104">
    <property type="entry name" value="RNase_III"/>
    <property type="match status" value="1"/>
</dbReference>
<dbReference type="InterPro" id="IPR014720">
    <property type="entry name" value="dsRBD_dom"/>
</dbReference>
<dbReference type="InterPro" id="IPR011907">
    <property type="entry name" value="RNase_III"/>
</dbReference>
<dbReference type="InterPro" id="IPR000999">
    <property type="entry name" value="RNase_III_dom"/>
</dbReference>
<dbReference type="InterPro" id="IPR036389">
    <property type="entry name" value="RNase_III_sf"/>
</dbReference>
<dbReference type="NCBIfam" id="TIGR02191">
    <property type="entry name" value="RNaseIII"/>
    <property type="match status" value="1"/>
</dbReference>
<dbReference type="PANTHER" id="PTHR11207:SF0">
    <property type="entry name" value="RIBONUCLEASE 3"/>
    <property type="match status" value="1"/>
</dbReference>
<dbReference type="PANTHER" id="PTHR11207">
    <property type="entry name" value="RIBONUCLEASE III"/>
    <property type="match status" value="1"/>
</dbReference>
<dbReference type="Pfam" id="PF00035">
    <property type="entry name" value="dsrm"/>
    <property type="match status" value="1"/>
</dbReference>
<dbReference type="Pfam" id="PF14622">
    <property type="entry name" value="Ribonucleas_3_3"/>
    <property type="match status" value="1"/>
</dbReference>
<dbReference type="SMART" id="SM00358">
    <property type="entry name" value="DSRM"/>
    <property type="match status" value="1"/>
</dbReference>
<dbReference type="SMART" id="SM00535">
    <property type="entry name" value="RIBOc"/>
    <property type="match status" value="1"/>
</dbReference>
<dbReference type="SUPFAM" id="SSF54768">
    <property type="entry name" value="dsRNA-binding domain-like"/>
    <property type="match status" value="1"/>
</dbReference>
<dbReference type="SUPFAM" id="SSF69065">
    <property type="entry name" value="RNase III domain-like"/>
    <property type="match status" value="1"/>
</dbReference>
<dbReference type="PROSITE" id="PS50137">
    <property type="entry name" value="DS_RBD"/>
    <property type="match status" value="1"/>
</dbReference>
<dbReference type="PROSITE" id="PS00517">
    <property type="entry name" value="RNASE_3_1"/>
    <property type="match status" value="1"/>
</dbReference>
<dbReference type="PROSITE" id="PS50142">
    <property type="entry name" value="RNASE_3_2"/>
    <property type="match status" value="1"/>
</dbReference>
<feature type="chain" id="PRO_0000228502" description="Ribonuclease 3">
    <location>
        <begin position="1"/>
        <end position="242"/>
    </location>
</feature>
<feature type="domain" description="RNase III" evidence="1">
    <location>
        <begin position="12"/>
        <end position="139"/>
    </location>
</feature>
<feature type="domain" description="DRBM" evidence="1">
    <location>
        <begin position="165"/>
        <end position="236"/>
    </location>
</feature>
<feature type="active site" evidence="1">
    <location>
        <position position="55"/>
    </location>
</feature>
<feature type="active site" evidence="1">
    <location>
        <position position="128"/>
    </location>
</feature>
<feature type="binding site" evidence="1">
    <location>
        <position position="51"/>
    </location>
    <ligand>
        <name>Mg(2+)</name>
        <dbReference type="ChEBI" id="CHEBI:18420"/>
    </ligand>
</feature>
<feature type="binding site" evidence="1">
    <location>
        <position position="125"/>
    </location>
    <ligand>
        <name>Mg(2+)</name>
        <dbReference type="ChEBI" id="CHEBI:18420"/>
    </ligand>
</feature>
<feature type="binding site" evidence="1">
    <location>
        <position position="128"/>
    </location>
    <ligand>
        <name>Mg(2+)</name>
        <dbReference type="ChEBI" id="CHEBI:18420"/>
    </ligand>
</feature>
<protein>
    <recommendedName>
        <fullName evidence="1">Ribonuclease 3</fullName>
        <ecNumber evidence="1">3.1.26.3</ecNumber>
    </recommendedName>
    <alternativeName>
        <fullName evidence="1">Ribonuclease III</fullName>
        <shortName evidence="1">RNase III</shortName>
    </alternativeName>
</protein>
<sequence length="242" mass="26080">MSNETPQQPTPANELLEALGTTLSPDLLVQALTHRSFSHEHPGVANYERLEFLGDAVLELVSTETLFTIHPDMTEGQLAKMRAKAVSEDALSAIAKTKLKVGPYILLGHGEAEQGGAEKNSILCDIVESLIGATFLEHGIDEARKVIHRLIDDTLAEVATEGPALDWKTSLTVKAHGLGKEEPVYHMEVSGPEYAQIFTARVSLGENGDIIGIGKGSSKRKAQLAAAEAGWKSLDSFKTRTK</sequence>
<name>RNC_BIFLO</name>
<gene>
    <name evidence="1" type="primary">rnc</name>
    <name type="ordered locus">BL0295</name>
</gene>
<accession>Q8G7H1</accession>
<comment type="function">
    <text evidence="1">Digests double-stranded RNA. Involved in the processing of primary rRNA transcript to yield the immediate precursors to the large and small rRNAs (23S and 16S). Processes some mRNAs, and tRNAs when they are encoded in the rRNA operon. Processes pre-crRNA and tracrRNA of type II CRISPR loci if present in the organism.</text>
</comment>
<comment type="catalytic activity">
    <reaction evidence="1">
        <text>Endonucleolytic cleavage to 5'-phosphomonoester.</text>
        <dbReference type="EC" id="3.1.26.3"/>
    </reaction>
</comment>
<comment type="cofactor">
    <cofactor evidence="1">
        <name>Mg(2+)</name>
        <dbReference type="ChEBI" id="CHEBI:18420"/>
    </cofactor>
</comment>
<comment type="subunit">
    <text evidence="1">Homodimer.</text>
</comment>
<comment type="subcellular location">
    <subcellularLocation>
        <location evidence="1">Cytoplasm</location>
    </subcellularLocation>
</comment>
<comment type="similarity">
    <text evidence="1">Belongs to the ribonuclease III family.</text>
</comment>
<comment type="sequence caution" evidence="2">
    <conflict type="erroneous initiation">
        <sequence resource="EMBL-CDS" id="AAN24135"/>
    </conflict>
    <text>Extended N-terminus.</text>
</comment>
<organism>
    <name type="scientific">Bifidobacterium longum (strain NCC 2705)</name>
    <dbReference type="NCBI Taxonomy" id="206672"/>
    <lineage>
        <taxon>Bacteria</taxon>
        <taxon>Bacillati</taxon>
        <taxon>Actinomycetota</taxon>
        <taxon>Actinomycetes</taxon>
        <taxon>Bifidobacteriales</taxon>
        <taxon>Bifidobacteriaceae</taxon>
        <taxon>Bifidobacterium</taxon>
    </lineage>
</organism>